<dbReference type="EC" id="3.6.4.13"/>
<dbReference type="EMBL" id="Z34846">
    <property type="protein sequence ID" value="CAA84355.1"/>
    <property type="molecule type" value="Genomic_DNA"/>
</dbReference>
<dbReference type="EMBL" id="AJ251914">
    <property type="protein sequence ID" value="CAB63856.1"/>
    <property type="molecule type" value="Genomic_DNA"/>
</dbReference>
<dbReference type="PIR" id="I47126">
    <property type="entry name" value="I47126"/>
</dbReference>
<dbReference type="RefSeq" id="NP_001005157.1">
    <property type="nucleotide sequence ID" value="NM_001005157.1"/>
</dbReference>
<dbReference type="RefSeq" id="XP_005665850.1">
    <property type="nucleotide sequence ID" value="XM_005665793.3"/>
</dbReference>
<dbReference type="RefSeq" id="XP_005665851.1">
    <property type="nucleotide sequence ID" value="XM_005665794.3"/>
</dbReference>
<dbReference type="SMR" id="Q29024"/>
<dbReference type="FunCoup" id="Q29024">
    <property type="interactions" value="3226"/>
</dbReference>
<dbReference type="STRING" id="9823.ENSSSCP00000031099"/>
<dbReference type="PaxDb" id="9823-ENSSSCP00000001487"/>
<dbReference type="PeptideAtlas" id="Q29024"/>
<dbReference type="Ensembl" id="ENSSSCT00000001529.6">
    <property type="protein sequence ID" value="ENSSSCP00000001487.4"/>
    <property type="gene ID" value="ENSSSCG00000001400.7"/>
</dbReference>
<dbReference type="Ensembl" id="ENSSSCT00000032673.5">
    <property type="protein sequence ID" value="ENSSSCP00000031099.5"/>
    <property type="gene ID" value="ENSSSCG00000001400.7"/>
</dbReference>
<dbReference type="Ensembl" id="ENSSSCT00000046178.4">
    <property type="protein sequence ID" value="ENSSSCP00000054460.3"/>
    <property type="gene ID" value="ENSSSCG00000001400.7"/>
</dbReference>
<dbReference type="Ensembl" id="ENSSSCT00000107775.1">
    <property type="protein sequence ID" value="ENSSSCP00000082163.1"/>
    <property type="gene ID" value="ENSSSCG00000001400.7"/>
</dbReference>
<dbReference type="Ensembl" id="ENSSSCT00015075572.1">
    <property type="protein sequence ID" value="ENSSSCP00015030326.1"/>
    <property type="gene ID" value="ENSSSCG00015055352.1"/>
</dbReference>
<dbReference type="Ensembl" id="ENSSSCT00025108220.1">
    <property type="protein sequence ID" value="ENSSSCP00025048975.1"/>
    <property type="gene ID" value="ENSSSCG00025077755.1"/>
</dbReference>
<dbReference type="Ensembl" id="ENSSSCT00030092403.1">
    <property type="protein sequence ID" value="ENSSSCP00030042516.1"/>
    <property type="gene ID" value="ENSSSCG00030066086.1"/>
</dbReference>
<dbReference type="Ensembl" id="ENSSSCT00035027981.1">
    <property type="protein sequence ID" value="ENSSSCP00035010754.1"/>
    <property type="gene ID" value="ENSSSCG00035021438.1"/>
</dbReference>
<dbReference type="Ensembl" id="ENSSSCT00040097911.1">
    <property type="protein sequence ID" value="ENSSSCP00040043691.1"/>
    <property type="gene ID" value="ENSSSCG00040071129.1"/>
</dbReference>
<dbReference type="Ensembl" id="ENSSSCT00040098307.1">
    <property type="protein sequence ID" value="ENSSSCP00040043904.1"/>
    <property type="gene ID" value="ENSSSCG00040071129.1"/>
</dbReference>
<dbReference type="Ensembl" id="ENSSSCT00045066073.1">
    <property type="protein sequence ID" value="ENSSSCP00045046822.1"/>
    <property type="gene ID" value="ENSSSCG00045038130.1"/>
</dbReference>
<dbReference type="Ensembl" id="ENSSSCT00045066227.1">
    <property type="protein sequence ID" value="ENSSSCP00045046942.1"/>
    <property type="gene ID" value="ENSSSCG00045038130.1"/>
</dbReference>
<dbReference type="Ensembl" id="ENSSSCT00050007892.1">
    <property type="protein sequence ID" value="ENSSSCP00050003344.1"/>
    <property type="gene ID" value="ENSSSCG00050005792.1"/>
</dbReference>
<dbReference type="Ensembl" id="ENSSSCT00055057558.1">
    <property type="protein sequence ID" value="ENSSSCP00055046055.1"/>
    <property type="gene ID" value="ENSSSCG00055028973.1"/>
</dbReference>
<dbReference type="Ensembl" id="ENSSSCT00055057707.1">
    <property type="protein sequence ID" value="ENSSSCP00055046173.1"/>
    <property type="gene ID" value="ENSSSCG00055028973.1"/>
</dbReference>
<dbReference type="Ensembl" id="ENSSSCT00060057469.1">
    <property type="protein sequence ID" value="ENSSSCP00060024584.1"/>
    <property type="gene ID" value="ENSSSCG00060042375.1"/>
</dbReference>
<dbReference type="Ensembl" id="ENSSSCT00065033711.1">
    <property type="protein sequence ID" value="ENSSSCP00065013956.1"/>
    <property type="gene ID" value="ENSSSCG00065025136.1"/>
</dbReference>
<dbReference type="Ensembl" id="ENSSSCT00070048206.1">
    <property type="protein sequence ID" value="ENSSSCP00070040698.1"/>
    <property type="gene ID" value="ENSSSCG00070024145.1"/>
</dbReference>
<dbReference type="Ensembl" id="ENSSSCT00105041276">
    <property type="protein sequence ID" value="ENSSSCP00105028836"/>
    <property type="gene ID" value="ENSSSCG00105021443"/>
</dbReference>
<dbReference type="Ensembl" id="ENSSSCT00115014832">
    <property type="protein sequence ID" value="ENSSSCP00115014018"/>
    <property type="gene ID" value="ENSSSCG00115008381"/>
</dbReference>
<dbReference type="GeneID" id="448813"/>
<dbReference type="KEGG" id="ssc:448813"/>
<dbReference type="CTD" id="7919"/>
<dbReference type="VGNC" id="VGNC:109422">
    <property type="gene designation" value="DDX39B"/>
</dbReference>
<dbReference type="eggNOG" id="KOG0329">
    <property type="taxonomic scope" value="Eukaryota"/>
</dbReference>
<dbReference type="GeneTree" id="ENSGT00940000160110"/>
<dbReference type="HOGENOM" id="CLU_003041_1_0_1"/>
<dbReference type="InParanoid" id="Q29024"/>
<dbReference type="OrthoDB" id="196131at2759"/>
<dbReference type="TreeFam" id="TF300442"/>
<dbReference type="Reactome" id="R-SSC-159236">
    <property type="pathway name" value="Transport of Mature mRNA derived from an Intron-Containing Transcript"/>
</dbReference>
<dbReference type="Reactome" id="R-SSC-72163">
    <property type="pathway name" value="mRNA Splicing - Major Pathway"/>
</dbReference>
<dbReference type="Reactome" id="R-SSC-72187">
    <property type="pathway name" value="mRNA 3'-end processing"/>
</dbReference>
<dbReference type="Reactome" id="R-SSC-73856">
    <property type="pathway name" value="RNA Polymerase II Transcription Termination"/>
</dbReference>
<dbReference type="Reactome" id="R-SSC-9013418">
    <property type="pathway name" value="RHOBTB2 GTPase cycle"/>
</dbReference>
<dbReference type="Proteomes" id="UP000008227">
    <property type="component" value="Chromosome 7"/>
</dbReference>
<dbReference type="Proteomes" id="UP000314985">
    <property type="component" value="Chromosome 7"/>
</dbReference>
<dbReference type="Proteomes" id="UP000694570">
    <property type="component" value="Unplaced"/>
</dbReference>
<dbReference type="Proteomes" id="UP000694571">
    <property type="component" value="Unplaced"/>
</dbReference>
<dbReference type="Proteomes" id="UP000694720">
    <property type="component" value="Unplaced"/>
</dbReference>
<dbReference type="Proteomes" id="UP000694722">
    <property type="component" value="Unplaced"/>
</dbReference>
<dbReference type="Proteomes" id="UP000694723">
    <property type="component" value="Unplaced"/>
</dbReference>
<dbReference type="Proteomes" id="UP000694724">
    <property type="component" value="Unplaced"/>
</dbReference>
<dbReference type="Proteomes" id="UP000694725">
    <property type="component" value="Unplaced"/>
</dbReference>
<dbReference type="Proteomes" id="UP000694726">
    <property type="component" value="Unplaced"/>
</dbReference>
<dbReference type="Proteomes" id="UP000694727">
    <property type="component" value="Unplaced"/>
</dbReference>
<dbReference type="Proteomes" id="UP000694728">
    <property type="component" value="Unplaced"/>
</dbReference>
<dbReference type="Bgee" id="ENSSSCG00000001400">
    <property type="expression patterns" value="Expressed in forelimb bud and 44 other cell types or tissues"/>
</dbReference>
<dbReference type="ExpressionAtlas" id="Q29024">
    <property type="expression patterns" value="baseline and differential"/>
</dbReference>
<dbReference type="GO" id="GO:0005737">
    <property type="term" value="C:cytoplasm"/>
    <property type="evidence" value="ECO:0007669"/>
    <property type="project" value="UniProtKB-SubCell"/>
</dbReference>
<dbReference type="GO" id="GO:0016607">
    <property type="term" value="C:nuclear speck"/>
    <property type="evidence" value="ECO:0007669"/>
    <property type="project" value="UniProtKB-SubCell"/>
</dbReference>
<dbReference type="GO" id="GO:0005681">
    <property type="term" value="C:spliceosomal complex"/>
    <property type="evidence" value="ECO:0007669"/>
    <property type="project" value="UniProtKB-KW"/>
</dbReference>
<dbReference type="GO" id="GO:0005524">
    <property type="term" value="F:ATP binding"/>
    <property type="evidence" value="ECO:0007669"/>
    <property type="project" value="UniProtKB-KW"/>
</dbReference>
<dbReference type="GO" id="GO:0016887">
    <property type="term" value="F:ATP hydrolysis activity"/>
    <property type="evidence" value="ECO:0007669"/>
    <property type="project" value="RHEA"/>
</dbReference>
<dbReference type="GO" id="GO:0003729">
    <property type="term" value="F:mRNA binding"/>
    <property type="evidence" value="ECO:0000318"/>
    <property type="project" value="GO_Central"/>
</dbReference>
<dbReference type="GO" id="GO:0003724">
    <property type="term" value="F:RNA helicase activity"/>
    <property type="evidence" value="ECO:0000318"/>
    <property type="project" value="GO_Central"/>
</dbReference>
<dbReference type="GO" id="GO:0006406">
    <property type="term" value="P:mRNA export from nucleus"/>
    <property type="evidence" value="ECO:0000318"/>
    <property type="project" value="GO_Central"/>
</dbReference>
<dbReference type="GO" id="GO:0000398">
    <property type="term" value="P:mRNA splicing, via spliceosome"/>
    <property type="evidence" value="ECO:0000318"/>
    <property type="project" value="GO_Central"/>
</dbReference>
<dbReference type="CDD" id="cd17950">
    <property type="entry name" value="DEADc_DDX39"/>
    <property type="match status" value="1"/>
</dbReference>
<dbReference type="CDD" id="cd18787">
    <property type="entry name" value="SF2_C_DEAD"/>
    <property type="match status" value="1"/>
</dbReference>
<dbReference type="FunFam" id="3.40.50.300:FF:000111">
    <property type="entry name" value="DEAD-box ATP-dependent RNA helicase"/>
    <property type="match status" value="1"/>
</dbReference>
<dbReference type="FunFam" id="3.40.50.300:FF:000168">
    <property type="entry name" value="DEAD-box ATP-dependent RNA helicase 56-like"/>
    <property type="match status" value="1"/>
</dbReference>
<dbReference type="Gene3D" id="3.40.50.300">
    <property type="entry name" value="P-loop containing nucleotide triphosphate hydrolases"/>
    <property type="match status" value="2"/>
</dbReference>
<dbReference type="InterPro" id="IPR011545">
    <property type="entry name" value="DEAD/DEAH_box_helicase_dom"/>
</dbReference>
<dbReference type="InterPro" id="IPR014001">
    <property type="entry name" value="Helicase_ATP-bd"/>
</dbReference>
<dbReference type="InterPro" id="IPR001650">
    <property type="entry name" value="Helicase_C-like"/>
</dbReference>
<dbReference type="InterPro" id="IPR027417">
    <property type="entry name" value="P-loop_NTPase"/>
</dbReference>
<dbReference type="InterPro" id="IPR014014">
    <property type="entry name" value="RNA_helicase_DEAD_Q_motif"/>
</dbReference>
<dbReference type="PANTHER" id="PTHR47958">
    <property type="entry name" value="ATP-DEPENDENT RNA HELICASE DBP3"/>
    <property type="match status" value="1"/>
</dbReference>
<dbReference type="Pfam" id="PF00270">
    <property type="entry name" value="DEAD"/>
    <property type="match status" value="1"/>
</dbReference>
<dbReference type="Pfam" id="PF00271">
    <property type="entry name" value="Helicase_C"/>
    <property type="match status" value="1"/>
</dbReference>
<dbReference type="SMART" id="SM00487">
    <property type="entry name" value="DEXDc"/>
    <property type="match status" value="1"/>
</dbReference>
<dbReference type="SMART" id="SM00490">
    <property type="entry name" value="HELICc"/>
    <property type="match status" value="1"/>
</dbReference>
<dbReference type="SUPFAM" id="SSF52540">
    <property type="entry name" value="P-loop containing nucleoside triphosphate hydrolases"/>
    <property type="match status" value="1"/>
</dbReference>
<dbReference type="PROSITE" id="PS51192">
    <property type="entry name" value="HELICASE_ATP_BIND_1"/>
    <property type="match status" value="1"/>
</dbReference>
<dbReference type="PROSITE" id="PS51194">
    <property type="entry name" value="HELICASE_CTER"/>
    <property type="match status" value="1"/>
</dbReference>
<dbReference type="PROSITE" id="PS51195">
    <property type="entry name" value="Q_MOTIF"/>
    <property type="match status" value="1"/>
</dbReference>
<protein>
    <recommendedName>
        <fullName>Spliceosome RNA helicase DDX39B</fullName>
        <ecNumber>3.6.4.13</ecNumber>
    </recommendedName>
    <alternativeName>
        <fullName>56 kDa U2AF65-associated protein</fullName>
    </alternativeName>
    <alternativeName>
        <fullName>DEAD box protein UAP56</fullName>
    </alternativeName>
</protein>
<reference key="1">
    <citation type="journal article" date="1995" name="Genomics">
        <title>The BAT1 gene in the MHC encodes an evolutionarily conserved putative nuclear RNA helicase of the DEAD family.</title>
        <authorList>
            <person name="Peelman L."/>
            <person name="Chardon P."/>
            <person name="Nunes M."/>
            <person name="Renard C."/>
            <person name="Geffrotin C."/>
            <person name="Vaiman M."/>
            <person name="van Zeveren A."/>
            <person name="Coppieters W."/>
            <person name="van de Weghe A."/>
            <person name="Bouquet Y."/>
            <person name="Choy W."/>
            <person name="Strominger J."/>
            <person name="Spies T."/>
        </authorList>
    </citation>
    <scope>NUCLEOTIDE SEQUENCE [GENOMIC DNA]</scope>
</reference>
<reference key="2">
    <citation type="journal article" date="2001" name="Tissue Antigens">
        <title>Sequence of the swine major histocompatibility complex region containing all non-classical class I genes.</title>
        <authorList>
            <person name="Chardon P."/>
            <person name="Rogel-Gaillard C."/>
            <person name="Cattolico L."/>
            <person name="Duprat S."/>
            <person name="Vaiman M."/>
            <person name="Renard C."/>
        </authorList>
    </citation>
    <scope>NUCLEOTIDE SEQUENCE [GENOMIC DNA]</scope>
    <source>
        <strain>Large white</strain>
        <tissue>Fibroblast</tissue>
    </source>
</reference>
<keyword id="KW-0007">Acetylation</keyword>
<keyword id="KW-0067">ATP-binding</keyword>
<keyword id="KW-0963">Cytoplasm</keyword>
<keyword id="KW-0347">Helicase</keyword>
<keyword id="KW-0378">Hydrolase</keyword>
<keyword id="KW-1017">Isopeptide bond</keyword>
<keyword id="KW-0507">mRNA processing</keyword>
<keyword id="KW-0508">mRNA splicing</keyword>
<keyword id="KW-0509">mRNA transport</keyword>
<keyword id="KW-0547">Nucleotide-binding</keyword>
<keyword id="KW-0539">Nucleus</keyword>
<keyword id="KW-0597">Phosphoprotein</keyword>
<keyword id="KW-1185">Reference proteome</keyword>
<keyword id="KW-0694">RNA-binding</keyword>
<keyword id="KW-0747">Spliceosome</keyword>
<keyword id="KW-0813">Transport</keyword>
<keyword id="KW-0832">Ubl conjugation</keyword>
<comment type="function">
    <text evidence="2">Involved in nuclear export of spliced and unspliced mRNA. Component of the TREX complex which is thought to couple mRNA transcription, processing and nuclear export, and specifically associates with spliced mRNA and not with unspliced pre-mRNA. The TREX complex is recruited to spliced mRNAs by a transcription-independent mechanism, binds to mRNA upstream of the exon-junction complex (EJC) and is recruited in a splicing- and cap-dependent manner to a region near the 5' end of the mRNA where it functions in mRNA export to the cytoplasm via the TAP/NXF1 pathway. The THOC1-THOC2-THOC3 core complex alone is sufficient to promote ATPase activity of DDX39B; in the complex THOC2 is the only component that directly interacts with DDX39B. Associates with SARNP/CIP29, which facilitates RNA binding of DDX39B and likely plays a role in mRNA export. May undergo several rounds of ATP hydrolysis during assembly of TREX to drive subsequent loading of components such as ALYREF/THOC4 and CHTOP onto mRNA. Also associates with pre-mRNA independent of ALYREF/THOC4. Involved in the nuclear export of intronless mRNA; the ATP-bound form is proposed to recruit export adapter ALYREF/THOC4 to intronless mRNA; its ATPase activity is cooperatively stimulated by RNA and ALYREF/THOC4 and ATP hydrolysis is thought to trigger the dissociation from RNA to allow the association of ALYREF/THOC4 and the NXF1-NXT1 heterodimer. Involved in transcription elongation and genome stability.</text>
</comment>
<comment type="function">
    <text evidence="2">Splice factor that is required for the first ATP-dependent step in spliceosome assembly and for the interaction of U2 snRNP with the branchpoint. Has both RNA-stimulated ATP binding/hydrolysis activity and ATP-dependent RNA unwinding activity. Even with the stimulation of RNA, the ATPase activity is weak. Can only hydrolyze ATP but not other NTPs. The RNA stimulation of ATPase activity does not have a strong preference for the sequence and length of the RNA. However, ssRNA stimulates the ATPase activity much more strongly than dsRNA. Can unwind 5' or 3' overhangs or blunt end RNA duplexes in vitro. The ATPase and helicase activities are not influenced by U2AF2; the effect of ALYREF/THOC4 is reported conflictingly.</text>
</comment>
<comment type="catalytic activity">
    <reaction evidence="2">
        <text>ATP + H2O = ADP + phosphate + H(+)</text>
        <dbReference type="Rhea" id="RHEA:13065"/>
        <dbReference type="ChEBI" id="CHEBI:15377"/>
        <dbReference type="ChEBI" id="CHEBI:15378"/>
        <dbReference type="ChEBI" id="CHEBI:30616"/>
        <dbReference type="ChEBI" id="CHEBI:43474"/>
        <dbReference type="ChEBI" id="CHEBI:456216"/>
        <dbReference type="EC" id="3.6.4.13"/>
    </reaction>
</comment>
<comment type="subunit">
    <text evidence="2">Homodimer, and heterodimer with DDX39A. DDX39B interacts with the THO subcomplex to form the THO-DDX39B complex which multimerizes into a 28-subunit tetrameric assembly. Component of the transcription/export (TREX) complex at least composed of ALYREF/THOC4, DDX39B, SARNP/CIP29, CHTOP and the THO subcomplex; in the complex interacts with THOC2. THOC1-THOC2-THOC3-DDX39B subcomplex is sufficient for the interaction with export factor NXF1-NXT1. TREX seems to have a dynamic structure involving ATP-dependent remodeling. Within the TREX complex bridges ALYREF/THOC4 and the THO subcomplex, and, in a ATP-dependent manner, ALYREF/THOC4 and SARNP/CIP29. Component of the spliceosome. Interacts directly with U2AF2. Interacts with RBM8A, RNPS1 and SRRM1, FYTTD1/UIF, THOC1, MX1 and POLDIP3. Interacts with LUZP4. Interacts with SARNP/CIP29 (via the C-terminal domain); the interaction is direct and facilitates RNA binding of DDX39B.</text>
</comment>
<comment type="subcellular location">
    <subcellularLocation>
        <location evidence="1">Nucleus</location>
    </subcellularLocation>
    <subcellularLocation>
        <location evidence="1">Nucleus speckle</location>
    </subcellularLocation>
    <subcellularLocation>
        <location evidence="1">Cytoplasm</location>
    </subcellularLocation>
    <text evidence="1">Can translocate to the cytoplasm in the presence of MX1.</text>
</comment>
<comment type="domain">
    <text evidence="1">The helicase C-terminal domain mediates interaction with ALYREF/THOC4.</text>
</comment>
<comment type="similarity">
    <text evidence="6">Belongs to the DEAD box helicase family. DECD subfamily.</text>
</comment>
<sequence>MAENDVDNELLDYEDDEVETAAGGDGAEAPAKKDVKGSYVSIHSSGFRDFLLKPELLRAIVDCGFEHPSEVQHECIPQAILGMDVLCQAKSGMGKTAVFVLATLQQLEPVTGQVSVLVMCHTRELAFQISKEYERFSKYMPNVKVAVFFGGLSIKKDEEVLKKNCPHIVVGTPGRILALARNKSLNLKHIKHFILDECDKMLEQLDMRRDVQEIFRMTPHEKQVMMFSATLSKEIRPVCRKFMQDPMEIFVDDETKLTLHGLQQYYVKLKDNEKNRKLFDLLDVLEFNQVVIFVKSVQRCIALAQLLVEQNFPAIAIHRGMPQEERLSRYQQFKDFQRRILVATNLFGRGMDIERVNIAFNYDMPEDSDTYLHRVARAGRFGTKGLAITFVSDENDAKILNDVQDRFEVNISELPDEIDISSYIEQTR</sequence>
<accession>Q29024</accession>
<organism>
    <name type="scientific">Sus scrofa</name>
    <name type="common">Pig</name>
    <dbReference type="NCBI Taxonomy" id="9823"/>
    <lineage>
        <taxon>Eukaryota</taxon>
        <taxon>Metazoa</taxon>
        <taxon>Chordata</taxon>
        <taxon>Craniata</taxon>
        <taxon>Vertebrata</taxon>
        <taxon>Euteleostomi</taxon>
        <taxon>Mammalia</taxon>
        <taxon>Eutheria</taxon>
        <taxon>Laurasiatheria</taxon>
        <taxon>Artiodactyla</taxon>
        <taxon>Suina</taxon>
        <taxon>Suidae</taxon>
        <taxon>Sus</taxon>
    </lineage>
</organism>
<gene>
    <name type="primary">DDX39B</name>
    <name type="synonym">BAT1</name>
    <name type="synonym">UAP56</name>
</gene>
<feature type="initiator methionine" description="Removed" evidence="2">
    <location>
        <position position="1"/>
    </location>
</feature>
<feature type="chain" id="PRO_0000055075" description="Spliceosome RNA helicase DDX39B">
    <location>
        <begin position="2"/>
        <end position="428"/>
    </location>
</feature>
<feature type="domain" description="Helicase ATP-binding" evidence="3">
    <location>
        <begin position="76"/>
        <end position="249"/>
    </location>
</feature>
<feature type="domain" description="Helicase C-terminal" evidence="4">
    <location>
        <begin position="261"/>
        <end position="422"/>
    </location>
</feature>
<feature type="region of interest" description="Disordered" evidence="5">
    <location>
        <begin position="1"/>
        <end position="31"/>
    </location>
</feature>
<feature type="short sequence motif" description="Q motif">
    <location>
        <begin position="45"/>
        <end position="73"/>
    </location>
</feature>
<feature type="short sequence motif" description="DECD box">
    <location>
        <begin position="196"/>
        <end position="199"/>
    </location>
</feature>
<feature type="compositionally biased region" description="Acidic residues" evidence="5">
    <location>
        <begin position="1"/>
        <end position="19"/>
    </location>
</feature>
<feature type="binding site" evidence="3">
    <location>
        <begin position="89"/>
        <end position="96"/>
    </location>
    <ligand>
        <name>ATP</name>
        <dbReference type="ChEBI" id="CHEBI:30616"/>
    </ligand>
</feature>
<feature type="modified residue" description="N-acetylalanine" evidence="2">
    <location>
        <position position="2"/>
    </location>
</feature>
<feature type="modified residue" description="N6-acetyllysine; alternate" evidence="2">
    <location>
        <position position="36"/>
    </location>
</feature>
<feature type="modified residue" description="Phosphoserine" evidence="2">
    <location>
        <position position="38"/>
    </location>
</feature>
<feature type="modified residue" description="Phosphoserine" evidence="2">
    <location>
        <position position="41"/>
    </location>
</feature>
<feature type="modified residue" description="Phosphothreonine" evidence="2">
    <location>
        <position position="172"/>
    </location>
</feature>
<feature type="cross-link" description="Glycyl lysine isopeptide (Lys-Gly) (interchain with G-Cter in SUMO2); alternate" evidence="2">
    <location>
        <position position="36"/>
    </location>
</feature>
<feature type="sequence conflict" description="In Ref. 1; CAA84355." evidence="6" ref="1">
    <location>
        <position position="30"/>
    </location>
</feature>
<feature type="sequence conflict" description="In Ref. 1; CAA84355." evidence="6" ref="1">
    <original>I</original>
    <variation>V</variation>
    <location>
        <position position="235"/>
    </location>
</feature>
<feature type="sequence conflict" description="In Ref. 1; CAA84355." evidence="6" ref="1">
    <original>R</original>
    <variation>G</variation>
    <location>
        <position position="339"/>
    </location>
</feature>
<proteinExistence type="inferred from homology"/>
<name>DX39B_PIG</name>
<evidence type="ECO:0000250" key="1"/>
<evidence type="ECO:0000250" key="2">
    <source>
        <dbReference type="UniProtKB" id="Q13838"/>
    </source>
</evidence>
<evidence type="ECO:0000255" key="3">
    <source>
        <dbReference type="PROSITE-ProRule" id="PRU00541"/>
    </source>
</evidence>
<evidence type="ECO:0000255" key="4">
    <source>
        <dbReference type="PROSITE-ProRule" id="PRU00542"/>
    </source>
</evidence>
<evidence type="ECO:0000256" key="5">
    <source>
        <dbReference type="SAM" id="MobiDB-lite"/>
    </source>
</evidence>
<evidence type="ECO:0000305" key="6"/>